<protein>
    <recommendedName>
        <fullName evidence="1">3-dehydroquinate synthase</fullName>
        <shortName evidence="1">DHQS</shortName>
        <ecNumber evidence="1">4.2.3.4</ecNumber>
    </recommendedName>
</protein>
<name>AROB_ECO57</name>
<proteinExistence type="inferred from homology"/>
<dbReference type="EC" id="4.2.3.4" evidence="1"/>
<dbReference type="EMBL" id="AE005174">
    <property type="protein sequence ID" value="AAG58489.1"/>
    <property type="molecule type" value="Genomic_DNA"/>
</dbReference>
<dbReference type="EMBL" id="BA000007">
    <property type="protein sequence ID" value="BAB37654.1"/>
    <property type="molecule type" value="Genomic_DNA"/>
</dbReference>
<dbReference type="PIR" id="E86003">
    <property type="entry name" value="E86003"/>
</dbReference>
<dbReference type="PIR" id="G91157">
    <property type="entry name" value="G91157"/>
</dbReference>
<dbReference type="RefSeq" id="NP_312258.1">
    <property type="nucleotide sequence ID" value="NC_002695.1"/>
</dbReference>
<dbReference type="RefSeq" id="WP_000439863.1">
    <property type="nucleotide sequence ID" value="NZ_VOAI01000004.1"/>
</dbReference>
<dbReference type="SMR" id="Q8X824"/>
<dbReference type="STRING" id="155864.Z4742"/>
<dbReference type="GeneID" id="915913"/>
<dbReference type="KEGG" id="ece:Z4742"/>
<dbReference type="KEGG" id="ecs:ECs_4231"/>
<dbReference type="PATRIC" id="fig|386585.9.peg.4417"/>
<dbReference type="eggNOG" id="COG0337">
    <property type="taxonomic scope" value="Bacteria"/>
</dbReference>
<dbReference type="HOGENOM" id="CLU_001201_0_2_6"/>
<dbReference type="OMA" id="IAIGMRM"/>
<dbReference type="UniPathway" id="UPA00053">
    <property type="reaction ID" value="UER00085"/>
</dbReference>
<dbReference type="Proteomes" id="UP000000558">
    <property type="component" value="Chromosome"/>
</dbReference>
<dbReference type="Proteomes" id="UP000002519">
    <property type="component" value="Chromosome"/>
</dbReference>
<dbReference type="GO" id="GO:0005737">
    <property type="term" value="C:cytoplasm"/>
    <property type="evidence" value="ECO:0007669"/>
    <property type="project" value="UniProtKB-SubCell"/>
</dbReference>
<dbReference type="GO" id="GO:0003856">
    <property type="term" value="F:3-dehydroquinate synthase activity"/>
    <property type="evidence" value="ECO:0007669"/>
    <property type="project" value="UniProtKB-UniRule"/>
</dbReference>
<dbReference type="GO" id="GO:0046872">
    <property type="term" value="F:metal ion binding"/>
    <property type="evidence" value="ECO:0007669"/>
    <property type="project" value="UniProtKB-KW"/>
</dbReference>
<dbReference type="GO" id="GO:0000166">
    <property type="term" value="F:nucleotide binding"/>
    <property type="evidence" value="ECO:0007669"/>
    <property type="project" value="UniProtKB-KW"/>
</dbReference>
<dbReference type="GO" id="GO:0008652">
    <property type="term" value="P:amino acid biosynthetic process"/>
    <property type="evidence" value="ECO:0007669"/>
    <property type="project" value="UniProtKB-KW"/>
</dbReference>
<dbReference type="GO" id="GO:0009073">
    <property type="term" value="P:aromatic amino acid family biosynthetic process"/>
    <property type="evidence" value="ECO:0007669"/>
    <property type="project" value="UniProtKB-KW"/>
</dbReference>
<dbReference type="GO" id="GO:0009423">
    <property type="term" value="P:chorismate biosynthetic process"/>
    <property type="evidence" value="ECO:0007669"/>
    <property type="project" value="UniProtKB-UniRule"/>
</dbReference>
<dbReference type="CDD" id="cd08195">
    <property type="entry name" value="DHQS"/>
    <property type="match status" value="1"/>
</dbReference>
<dbReference type="FunFam" id="1.20.1090.10:FF:000002">
    <property type="entry name" value="3-dehydroquinate synthase"/>
    <property type="match status" value="1"/>
</dbReference>
<dbReference type="FunFam" id="3.40.50.1970:FF:000001">
    <property type="entry name" value="3-dehydroquinate synthase"/>
    <property type="match status" value="1"/>
</dbReference>
<dbReference type="Gene3D" id="3.40.50.1970">
    <property type="match status" value="1"/>
</dbReference>
<dbReference type="Gene3D" id="1.20.1090.10">
    <property type="entry name" value="Dehydroquinate synthase-like - alpha domain"/>
    <property type="match status" value="1"/>
</dbReference>
<dbReference type="HAMAP" id="MF_00110">
    <property type="entry name" value="DHQ_synthase"/>
    <property type="match status" value="1"/>
</dbReference>
<dbReference type="InterPro" id="IPR050071">
    <property type="entry name" value="Dehydroquinate_synthase"/>
</dbReference>
<dbReference type="InterPro" id="IPR016037">
    <property type="entry name" value="DHQ_synth_AroB"/>
</dbReference>
<dbReference type="InterPro" id="IPR030963">
    <property type="entry name" value="DHQ_synth_fam"/>
</dbReference>
<dbReference type="InterPro" id="IPR030960">
    <property type="entry name" value="DHQS/DOIS_N"/>
</dbReference>
<dbReference type="InterPro" id="IPR056179">
    <property type="entry name" value="DHQS_C"/>
</dbReference>
<dbReference type="NCBIfam" id="TIGR01357">
    <property type="entry name" value="aroB"/>
    <property type="match status" value="1"/>
</dbReference>
<dbReference type="PANTHER" id="PTHR43622">
    <property type="entry name" value="3-DEHYDROQUINATE SYNTHASE"/>
    <property type="match status" value="1"/>
</dbReference>
<dbReference type="PANTHER" id="PTHR43622:SF7">
    <property type="entry name" value="3-DEHYDROQUINATE SYNTHASE, CHLOROPLASTIC"/>
    <property type="match status" value="1"/>
</dbReference>
<dbReference type="Pfam" id="PF01761">
    <property type="entry name" value="DHQ_synthase"/>
    <property type="match status" value="1"/>
</dbReference>
<dbReference type="Pfam" id="PF24621">
    <property type="entry name" value="DHQS_C"/>
    <property type="match status" value="1"/>
</dbReference>
<dbReference type="PIRSF" id="PIRSF001455">
    <property type="entry name" value="DHQ_synth"/>
    <property type="match status" value="1"/>
</dbReference>
<dbReference type="SUPFAM" id="SSF56796">
    <property type="entry name" value="Dehydroquinate synthase-like"/>
    <property type="match status" value="1"/>
</dbReference>
<evidence type="ECO:0000255" key="1">
    <source>
        <dbReference type="HAMAP-Rule" id="MF_00110"/>
    </source>
</evidence>
<evidence type="ECO:0000305" key="2"/>
<accession>Q8X824</accession>
<reference key="1">
    <citation type="journal article" date="2001" name="Nature">
        <title>Genome sequence of enterohaemorrhagic Escherichia coli O157:H7.</title>
        <authorList>
            <person name="Perna N.T."/>
            <person name="Plunkett G. III"/>
            <person name="Burland V."/>
            <person name="Mau B."/>
            <person name="Glasner J.D."/>
            <person name="Rose D.J."/>
            <person name="Mayhew G.F."/>
            <person name="Evans P.S."/>
            <person name="Gregor J."/>
            <person name="Kirkpatrick H.A."/>
            <person name="Posfai G."/>
            <person name="Hackett J."/>
            <person name="Klink S."/>
            <person name="Boutin A."/>
            <person name="Shao Y."/>
            <person name="Miller L."/>
            <person name="Grotbeck E.J."/>
            <person name="Davis N.W."/>
            <person name="Lim A."/>
            <person name="Dimalanta E.T."/>
            <person name="Potamousis K."/>
            <person name="Apodaca J."/>
            <person name="Anantharaman T.S."/>
            <person name="Lin J."/>
            <person name="Yen G."/>
            <person name="Schwartz D.C."/>
            <person name="Welch R.A."/>
            <person name="Blattner F.R."/>
        </authorList>
    </citation>
    <scope>NUCLEOTIDE SEQUENCE [LARGE SCALE GENOMIC DNA]</scope>
    <source>
        <strain>O157:H7 / EDL933 / ATCC 700927 / EHEC</strain>
    </source>
</reference>
<reference key="2">
    <citation type="journal article" date="2001" name="DNA Res.">
        <title>Complete genome sequence of enterohemorrhagic Escherichia coli O157:H7 and genomic comparison with a laboratory strain K-12.</title>
        <authorList>
            <person name="Hayashi T."/>
            <person name="Makino K."/>
            <person name="Ohnishi M."/>
            <person name="Kurokawa K."/>
            <person name="Ishii K."/>
            <person name="Yokoyama K."/>
            <person name="Han C.-G."/>
            <person name="Ohtsubo E."/>
            <person name="Nakayama K."/>
            <person name="Murata T."/>
            <person name="Tanaka M."/>
            <person name="Tobe T."/>
            <person name="Iida T."/>
            <person name="Takami H."/>
            <person name="Honda T."/>
            <person name="Sasakawa C."/>
            <person name="Ogasawara N."/>
            <person name="Yasunaga T."/>
            <person name="Kuhara S."/>
            <person name="Shiba T."/>
            <person name="Hattori M."/>
            <person name="Shinagawa H."/>
        </authorList>
    </citation>
    <scope>NUCLEOTIDE SEQUENCE [LARGE SCALE GENOMIC DNA]</scope>
    <source>
        <strain>O157:H7 / Sakai / RIMD 0509952 / EHEC</strain>
    </source>
</reference>
<gene>
    <name evidence="1" type="primary">aroB</name>
    <name type="ordered locus">Z4742</name>
    <name type="ordered locus">ECs4231</name>
</gene>
<feature type="chain" id="PRO_0000140739" description="3-dehydroquinate synthase">
    <location>
        <begin position="1"/>
        <end position="362"/>
    </location>
</feature>
<feature type="binding site" evidence="1">
    <location>
        <begin position="71"/>
        <end position="76"/>
    </location>
    <ligand>
        <name>NAD(+)</name>
        <dbReference type="ChEBI" id="CHEBI:57540"/>
    </ligand>
</feature>
<feature type="binding site" evidence="1">
    <location>
        <begin position="105"/>
        <end position="109"/>
    </location>
    <ligand>
        <name>NAD(+)</name>
        <dbReference type="ChEBI" id="CHEBI:57540"/>
    </ligand>
</feature>
<feature type="binding site" evidence="1">
    <location>
        <begin position="129"/>
        <end position="130"/>
    </location>
    <ligand>
        <name>NAD(+)</name>
        <dbReference type="ChEBI" id="CHEBI:57540"/>
    </ligand>
</feature>
<feature type="binding site" evidence="1">
    <location>
        <position position="142"/>
    </location>
    <ligand>
        <name>NAD(+)</name>
        <dbReference type="ChEBI" id="CHEBI:57540"/>
    </ligand>
</feature>
<feature type="binding site" evidence="1">
    <location>
        <position position="151"/>
    </location>
    <ligand>
        <name>NAD(+)</name>
        <dbReference type="ChEBI" id="CHEBI:57540"/>
    </ligand>
</feature>
<feature type="binding site" evidence="1">
    <location>
        <begin position="169"/>
        <end position="172"/>
    </location>
    <ligand>
        <name>NAD(+)</name>
        <dbReference type="ChEBI" id="CHEBI:57540"/>
    </ligand>
</feature>
<feature type="binding site" evidence="1">
    <location>
        <position position="184"/>
    </location>
    <ligand>
        <name>Zn(2+)</name>
        <dbReference type="ChEBI" id="CHEBI:29105"/>
    </ligand>
</feature>
<feature type="binding site" evidence="1">
    <location>
        <position position="247"/>
    </location>
    <ligand>
        <name>Zn(2+)</name>
        <dbReference type="ChEBI" id="CHEBI:29105"/>
    </ligand>
</feature>
<feature type="binding site" evidence="1">
    <location>
        <position position="264"/>
    </location>
    <ligand>
        <name>Zn(2+)</name>
        <dbReference type="ChEBI" id="CHEBI:29105"/>
    </ligand>
</feature>
<comment type="function">
    <text evidence="1">Catalyzes the conversion of 3-deoxy-D-arabino-heptulosonate 7-phosphate (DAHP) to dehydroquinate (DHQ).</text>
</comment>
<comment type="catalytic activity">
    <reaction evidence="1">
        <text>7-phospho-2-dehydro-3-deoxy-D-arabino-heptonate = 3-dehydroquinate + phosphate</text>
        <dbReference type="Rhea" id="RHEA:21968"/>
        <dbReference type="ChEBI" id="CHEBI:32364"/>
        <dbReference type="ChEBI" id="CHEBI:43474"/>
        <dbReference type="ChEBI" id="CHEBI:58394"/>
        <dbReference type="EC" id="4.2.3.4"/>
    </reaction>
</comment>
<comment type="cofactor">
    <cofactor evidence="1">
        <name>NAD(+)</name>
        <dbReference type="ChEBI" id="CHEBI:57540"/>
    </cofactor>
</comment>
<comment type="cofactor">
    <cofactor evidence="1">
        <name>Co(2+)</name>
        <dbReference type="ChEBI" id="CHEBI:48828"/>
    </cofactor>
    <cofactor evidence="1">
        <name>Zn(2+)</name>
        <dbReference type="ChEBI" id="CHEBI:29105"/>
    </cofactor>
    <text evidence="1">Binds 1 divalent metal cation per subunit. Can use either Co(2+) or Zn(2+).</text>
</comment>
<comment type="pathway">
    <text evidence="1">Metabolic intermediate biosynthesis; chorismate biosynthesis; chorismate from D-erythrose 4-phosphate and phosphoenolpyruvate: step 2/7.</text>
</comment>
<comment type="subcellular location">
    <subcellularLocation>
        <location evidence="1">Cytoplasm</location>
    </subcellularLocation>
</comment>
<comment type="similarity">
    <text evidence="1 2">Belongs to the sugar phosphate cyclases superfamily. Dehydroquinate synthase family.</text>
</comment>
<organism>
    <name type="scientific">Escherichia coli O157:H7</name>
    <dbReference type="NCBI Taxonomy" id="83334"/>
    <lineage>
        <taxon>Bacteria</taxon>
        <taxon>Pseudomonadati</taxon>
        <taxon>Pseudomonadota</taxon>
        <taxon>Gammaproteobacteria</taxon>
        <taxon>Enterobacterales</taxon>
        <taxon>Enterobacteriaceae</taxon>
        <taxon>Escherichia</taxon>
    </lineage>
</organism>
<sequence>MERIVVTLGERSYPITIASGLFNEPASFLPLKSGEQVMLVTNETLAPLYLDKVRGVLEQAGVNVDSVILPDGEQYKSLAVLDTVFTALLQKPHGRDTTLVALGGGVVGDLTGFAAASYQRGVRFIQVPTTLLSQVDSSVGGKTAVNHPLGKNMIGAFYQPASVVVDLDCLKTLPPRELASGLAEVIKYGIILDGTFFNWLEENLDALLRLDGPAMAYCIRRCCELKAEVVAADERETGLRALLNLGHTFGHAIEAEMGYGNWLHGEAVAAGMVMAARTSERLGQFSSAETQRIITLLTRAGLPVNGPREMSAQAYLPHMLRDKKVLAGEMRLILPLAIGKSEVRSGVSHELVLNAIADCQSA</sequence>
<keyword id="KW-0028">Amino-acid biosynthesis</keyword>
<keyword id="KW-0057">Aromatic amino acid biosynthesis</keyword>
<keyword id="KW-0170">Cobalt</keyword>
<keyword id="KW-0963">Cytoplasm</keyword>
<keyword id="KW-0456">Lyase</keyword>
<keyword id="KW-0479">Metal-binding</keyword>
<keyword id="KW-0520">NAD</keyword>
<keyword id="KW-0547">Nucleotide-binding</keyword>
<keyword id="KW-1185">Reference proteome</keyword>
<keyword id="KW-0862">Zinc</keyword>